<gene>
    <name evidence="1" type="primary">ilvD1</name>
    <name type="ordered locus">NFA_11740</name>
</gene>
<protein>
    <recommendedName>
        <fullName evidence="1">Dihydroxy-acid dehydratase 1</fullName>
        <shortName evidence="1">DAD 1</shortName>
        <ecNumber evidence="1">4.2.1.9</ecNumber>
    </recommendedName>
</protein>
<name>ILVD1_NOCFA</name>
<organism>
    <name type="scientific">Nocardia farcinica (strain IFM 10152)</name>
    <dbReference type="NCBI Taxonomy" id="247156"/>
    <lineage>
        <taxon>Bacteria</taxon>
        <taxon>Bacillati</taxon>
        <taxon>Actinomycetota</taxon>
        <taxon>Actinomycetes</taxon>
        <taxon>Mycobacteriales</taxon>
        <taxon>Nocardiaceae</taxon>
        <taxon>Nocardia</taxon>
    </lineage>
</organism>
<accession>Q5Z0M2</accession>
<evidence type="ECO:0000255" key="1">
    <source>
        <dbReference type="HAMAP-Rule" id="MF_00012"/>
    </source>
</evidence>
<evidence type="ECO:0000256" key="2">
    <source>
        <dbReference type="SAM" id="MobiDB-lite"/>
    </source>
</evidence>
<reference key="1">
    <citation type="journal article" date="2004" name="Proc. Natl. Acad. Sci. U.S.A.">
        <title>The complete genomic sequence of Nocardia farcinica IFM 10152.</title>
        <authorList>
            <person name="Ishikawa J."/>
            <person name="Yamashita A."/>
            <person name="Mikami Y."/>
            <person name="Hoshino Y."/>
            <person name="Kurita H."/>
            <person name="Hotta K."/>
            <person name="Shiba T."/>
            <person name="Hattori M."/>
        </authorList>
    </citation>
    <scope>NUCLEOTIDE SEQUENCE [LARGE SCALE GENOMIC DNA]</scope>
    <source>
        <strain>IFM 10152</strain>
    </source>
</reference>
<keyword id="KW-0001">2Fe-2S</keyword>
<keyword id="KW-0028">Amino-acid biosynthesis</keyword>
<keyword id="KW-0100">Branched-chain amino acid biosynthesis</keyword>
<keyword id="KW-0408">Iron</keyword>
<keyword id="KW-0411">Iron-sulfur</keyword>
<keyword id="KW-0456">Lyase</keyword>
<keyword id="KW-0460">Magnesium</keyword>
<keyword id="KW-0479">Metal-binding</keyword>
<keyword id="KW-1185">Reference proteome</keyword>
<sequence>MAEQTNTPDLKPRSRDVTDGLERTAARGMLRAVGMGDDDWEKPQIGVASSWNEITPCNLSLDRLAQGCKDGVFAAGGFPMQFGTISVSDGISMGHEGMHFSLVSREVIADSVETVMQAERLDGSVLLAGCDKSLPGMLMAAARLDLASVFLYAGSILPGIAKLSDGTEREVTIIDAFEAVGACARGLMSRADVDAIERAICPGEGACGGMYTANTMASAAEALGMSLPGSAAPPATDRRRDGYARRSGQAVVELLRRGITARDILTKEAFENAIAVVMAFGGSTNAVLHLLAIAHEARVELTLDDFARVGRRVPHLADVKPFGAHVMTDVDRIGGVPVMMKTLLDAGLLHGDCLTVTGRTVAENLAHIAPPDPDGKVVRALNDPIHPTGGITILSGSLAPGGAVVKSAGFDEDVFTGTARVFDRERAAMDALEDGTITAGDVVVIRYEGPKGGPGMREMLAITAAIKGAGLGKDVLLLTDGRFSGGTTGLCVGHVAPEAVDGGPIAFVRDGDRIRLDVAAGTLDLLVEPAELERRKQDWRPLPPRYTRGVLAKYTKLVGSASVGAVCD</sequence>
<comment type="function">
    <text evidence="1">Functions in the biosynthesis of branched-chain amino acids. Catalyzes the dehydration of (2R,3R)-2,3-dihydroxy-3-methylpentanoate (2,3-dihydroxy-3-methylvalerate) into 2-oxo-3-methylpentanoate (2-oxo-3-methylvalerate) and of (2R)-2,3-dihydroxy-3-methylbutanoate (2,3-dihydroxyisovalerate) into 2-oxo-3-methylbutanoate (2-oxoisovalerate), the penultimate precursor to L-isoleucine and L-valine, respectively.</text>
</comment>
<comment type="catalytic activity">
    <reaction evidence="1">
        <text>(2R)-2,3-dihydroxy-3-methylbutanoate = 3-methyl-2-oxobutanoate + H2O</text>
        <dbReference type="Rhea" id="RHEA:24809"/>
        <dbReference type="ChEBI" id="CHEBI:11851"/>
        <dbReference type="ChEBI" id="CHEBI:15377"/>
        <dbReference type="ChEBI" id="CHEBI:49072"/>
        <dbReference type="EC" id="4.2.1.9"/>
    </reaction>
    <physiologicalReaction direction="left-to-right" evidence="1">
        <dbReference type="Rhea" id="RHEA:24810"/>
    </physiologicalReaction>
</comment>
<comment type="catalytic activity">
    <reaction evidence="1">
        <text>(2R,3R)-2,3-dihydroxy-3-methylpentanoate = (S)-3-methyl-2-oxopentanoate + H2O</text>
        <dbReference type="Rhea" id="RHEA:27694"/>
        <dbReference type="ChEBI" id="CHEBI:15377"/>
        <dbReference type="ChEBI" id="CHEBI:35146"/>
        <dbReference type="ChEBI" id="CHEBI:49258"/>
        <dbReference type="EC" id="4.2.1.9"/>
    </reaction>
    <physiologicalReaction direction="left-to-right" evidence="1">
        <dbReference type="Rhea" id="RHEA:27695"/>
    </physiologicalReaction>
</comment>
<comment type="cofactor">
    <cofactor evidence="1">
        <name>[2Fe-2S] cluster</name>
        <dbReference type="ChEBI" id="CHEBI:190135"/>
    </cofactor>
    <text evidence="1">Binds 1 [2Fe-2S] cluster per subunit. This cluster acts as a Lewis acid cofactor.</text>
</comment>
<comment type="cofactor">
    <cofactor evidence="1">
        <name>Mg(2+)</name>
        <dbReference type="ChEBI" id="CHEBI:18420"/>
    </cofactor>
</comment>
<comment type="pathway">
    <text evidence="1">Amino-acid biosynthesis; L-isoleucine biosynthesis; L-isoleucine from 2-oxobutanoate: step 3/4.</text>
</comment>
<comment type="pathway">
    <text evidence="1">Amino-acid biosynthesis; L-valine biosynthesis; L-valine from pyruvate: step 3/4.</text>
</comment>
<comment type="subunit">
    <text evidence="1">Homodimer.</text>
</comment>
<comment type="similarity">
    <text evidence="1">Belongs to the IlvD/Edd family.</text>
</comment>
<dbReference type="EC" id="4.2.1.9" evidence="1"/>
<dbReference type="EMBL" id="AP006618">
    <property type="protein sequence ID" value="BAD56019.1"/>
    <property type="molecule type" value="Genomic_DNA"/>
</dbReference>
<dbReference type="RefSeq" id="WP_011207704.1">
    <property type="nucleotide sequence ID" value="NC_006361.1"/>
</dbReference>
<dbReference type="SMR" id="Q5Z0M2"/>
<dbReference type="STRING" id="247156.NFA_11740"/>
<dbReference type="GeneID" id="61131996"/>
<dbReference type="KEGG" id="nfa:NFA_11740"/>
<dbReference type="eggNOG" id="COG0129">
    <property type="taxonomic scope" value="Bacteria"/>
</dbReference>
<dbReference type="HOGENOM" id="CLU_014271_4_2_11"/>
<dbReference type="OrthoDB" id="9807077at2"/>
<dbReference type="UniPathway" id="UPA00047">
    <property type="reaction ID" value="UER00057"/>
</dbReference>
<dbReference type="UniPathway" id="UPA00049">
    <property type="reaction ID" value="UER00061"/>
</dbReference>
<dbReference type="Proteomes" id="UP000006820">
    <property type="component" value="Chromosome"/>
</dbReference>
<dbReference type="GO" id="GO:0051537">
    <property type="term" value="F:2 iron, 2 sulfur cluster binding"/>
    <property type="evidence" value="ECO:0007669"/>
    <property type="project" value="UniProtKB-UniRule"/>
</dbReference>
<dbReference type="GO" id="GO:0004160">
    <property type="term" value="F:dihydroxy-acid dehydratase activity"/>
    <property type="evidence" value="ECO:0007669"/>
    <property type="project" value="UniProtKB-UniRule"/>
</dbReference>
<dbReference type="GO" id="GO:0000287">
    <property type="term" value="F:magnesium ion binding"/>
    <property type="evidence" value="ECO:0007669"/>
    <property type="project" value="UniProtKB-UniRule"/>
</dbReference>
<dbReference type="GO" id="GO:0009097">
    <property type="term" value="P:isoleucine biosynthetic process"/>
    <property type="evidence" value="ECO:0007669"/>
    <property type="project" value="UniProtKB-UniRule"/>
</dbReference>
<dbReference type="GO" id="GO:0009099">
    <property type="term" value="P:L-valine biosynthetic process"/>
    <property type="evidence" value="ECO:0007669"/>
    <property type="project" value="UniProtKB-UniRule"/>
</dbReference>
<dbReference type="FunFam" id="3.50.30.80:FF:000001">
    <property type="entry name" value="Dihydroxy-acid dehydratase"/>
    <property type="match status" value="1"/>
</dbReference>
<dbReference type="Gene3D" id="3.50.30.80">
    <property type="entry name" value="IlvD/EDD C-terminal domain-like"/>
    <property type="match status" value="1"/>
</dbReference>
<dbReference type="HAMAP" id="MF_00012">
    <property type="entry name" value="IlvD"/>
    <property type="match status" value="1"/>
</dbReference>
<dbReference type="InterPro" id="IPR050165">
    <property type="entry name" value="DHAD_IlvD/Edd"/>
</dbReference>
<dbReference type="InterPro" id="IPR042096">
    <property type="entry name" value="Dihydro-acid_dehy_C"/>
</dbReference>
<dbReference type="InterPro" id="IPR004404">
    <property type="entry name" value="DihydroxyA_deHydtase"/>
</dbReference>
<dbReference type="InterPro" id="IPR020558">
    <property type="entry name" value="DiOHA_6PGluconate_deHydtase_CS"/>
</dbReference>
<dbReference type="InterPro" id="IPR056740">
    <property type="entry name" value="ILV_EDD_C"/>
</dbReference>
<dbReference type="InterPro" id="IPR000581">
    <property type="entry name" value="ILV_EDD_N"/>
</dbReference>
<dbReference type="InterPro" id="IPR037237">
    <property type="entry name" value="IlvD/EDD_N"/>
</dbReference>
<dbReference type="NCBIfam" id="TIGR00110">
    <property type="entry name" value="ilvD"/>
    <property type="match status" value="1"/>
</dbReference>
<dbReference type="NCBIfam" id="NF002068">
    <property type="entry name" value="PRK00911.1"/>
    <property type="match status" value="1"/>
</dbReference>
<dbReference type="PANTHER" id="PTHR21000">
    <property type="entry name" value="DIHYDROXY-ACID DEHYDRATASE DAD"/>
    <property type="match status" value="1"/>
</dbReference>
<dbReference type="PANTHER" id="PTHR21000:SF5">
    <property type="entry name" value="DIHYDROXY-ACID DEHYDRATASE, MITOCHONDRIAL"/>
    <property type="match status" value="1"/>
</dbReference>
<dbReference type="Pfam" id="PF24877">
    <property type="entry name" value="ILV_EDD_C"/>
    <property type="match status" value="1"/>
</dbReference>
<dbReference type="Pfam" id="PF00920">
    <property type="entry name" value="ILVD_EDD_N"/>
    <property type="match status" value="1"/>
</dbReference>
<dbReference type="SUPFAM" id="SSF143975">
    <property type="entry name" value="IlvD/EDD N-terminal domain-like"/>
    <property type="match status" value="1"/>
</dbReference>
<dbReference type="SUPFAM" id="SSF52016">
    <property type="entry name" value="LeuD/IlvD-like"/>
    <property type="match status" value="1"/>
</dbReference>
<dbReference type="PROSITE" id="PS00886">
    <property type="entry name" value="ILVD_EDD_1"/>
    <property type="match status" value="1"/>
</dbReference>
<dbReference type="PROSITE" id="PS00887">
    <property type="entry name" value="ILVD_EDD_2"/>
    <property type="match status" value="1"/>
</dbReference>
<proteinExistence type="inferred from homology"/>
<feature type="chain" id="PRO_0000225401" description="Dihydroxy-acid dehydratase 1">
    <location>
        <begin position="1"/>
        <end position="568"/>
    </location>
</feature>
<feature type="region of interest" description="Disordered" evidence="2">
    <location>
        <begin position="1"/>
        <end position="22"/>
    </location>
</feature>
<feature type="compositionally biased region" description="Basic and acidic residues" evidence="2">
    <location>
        <begin position="10"/>
        <end position="22"/>
    </location>
</feature>
<feature type="active site" description="Proton acceptor" evidence="1">
    <location>
        <position position="484"/>
    </location>
</feature>
<feature type="binding site" evidence="1">
    <location>
        <position position="57"/>
    </location>
    <ligand>
        <name>[2Fe-2S] cluster</name>
        <dbReference type="ChEBI" id="CHEBI:190135"/>
    </ligand>
</feature>
<feature type="binding site" evidence="1">
    <location>
        <position position="89"/>
    </location>
    <ligand>
        <name>Mg(2+)</name>
        <dbReference type="ChEBI" id="CHEBI:18420"/>
    </ligand>
</feature>
<feature type="binding site" evidence="1">
    <location>
        <position position="130"/>
    </location>
    <ligand>
        <name>[2Fe-2S] cluster</name>
        <dbReference type="ChEBI" id="CHEBI:190135"/>
    </ligand>
</feature>
<feature type="binding site" evidence="1">
    <location>
        <position position="131"/>
    </location>
    <ligand>
        <name>Mg(2+)</name>
        <dbReference type="ChEBI" id="CHEBI:18420"/>
    </ligand>
</feature>
<feature type="binding site" description="via carbamate group" evidence="1">
    <location>
        <position position="132"/>
    </location>
    <ligand>
        <name>Mg(2+)</name>
        <dbReference type="ChEBI" id="CHEBI:18420"/>
    </ligand>
</feature>
<feature type="binding site" evidence="1">
    <location>
        <position position="207"/>
    </location>
    <ligand>
        <name>[2Fe-2S] cluster</name>
        <dbReference type="ChEBI" id="CHEBI:190135"/>
    </ligand>
</feature>
<feature type="binding site" evidence="1">
    <location>
        <position position="458"/>
    </location>
    <ligand>
        <name>Mg(2+)</name>
        <dbReference type="ChEBI" id="CHEBI:18420"/>
    </ligand>
</feature>
<feature type="modified residue" description="N6-carboxylysine" evidence="1">
    <location>
        <position position="132"/>
    </location>
</feature>